<evidence type="ECO:0000255" key="1">
    <source>
        <dbReference type="HAMAP-Rule" id="MF_01315"/>
    </source>
</evidence>
<evidence type="ECO:0000256" key="2">
    <source>
        <dbReference type="SAM" id="MobiDB-lite"/>
    </source>
</evidence>
<evidence type="ECO:0000305" key="3"/>
<comment type="function">
    <text evidence="1">Located at the top of the head of the 30S subunit, it contacts several helices of the 16S rRNA. In the 70S ribosome it contacts the 23S rRNA (bridge B1a) and protein L5 of the 50S subunit (bridge B1b), connecting the 2 subunits; these bridges are implicated in subunit movement. Contacts the tRNAs in the A and P-sites.</text>
</comment>
<comment type="subunit">
    <text evidence="1">Part of the 30S ribosomal subunit. Forms a loose heterodimer with protein S19. Forms two bridges to the 50S subunit in the 70S ribosome.</text>
</comment>
<comment type="similarity">
    <text evidence="1">Belongs to the universal ribosomal protein uS13 family.</text>
</comment>
<gene>
    <name evidence="1" type="primary">rpsM</name>
    <name type="ordered locus">Acid_5093</name>
</gene>
<protein>
    <recommendedName>
        <fullName evidence="1">Small ribosomal subunit protein uS13</fullName>
    </recommendedName>
    <alternativeName>
        <fullName evidence="3">30S ribosomal protein S13</fullName>
    </alternativeName>
</protein>
<organism>
    <name type="scientific">Solibacter usitatus (strain Ellin6076)</name>
    <dbReference type="NCBI Taxonomy" id="234267"/>
    <lineage>
        <taxon>Bacteria</taxon>
        <taxon>Pseudomonadati</taxon>
        <taxon>Acidobacteriota</taxon>
        <taxon>Terriglobia</taxon>
        <taxon>Bryobacterales</taxon>
        <taxon>Solibacteraceae</taxon>
        <taxon>Candidatus Solibacter</taxon>
    </lineage>
</organism>
<accession>Q01WB7</accession>
<keyword id="KW-0687">Ribonucleoprotein</keyword>
<keyword id="KW-0689">Ribosomal protein</keyword>
<keyword id="KW-0694">RNA-binding</keyword>
<keyword id="KW-0699">rRNA-binding</keyword>
<keyword id="KW-0820">tRNA-binding</keyword>
<name>RS13_SOLUE</name>
<feature type="chain" id="PRO_0000306713" description="Small ribosomal subunit protein uS13">
    <location>
        <begin position="1"/>
        <end position="128"/>
    </location>
</feature>
<feature type="region of interest" description="Disordered" evidence="2">
    <location>
        <begin position="85"/>
        <end position="128"/>
    </location>
</feature>
<feature type="compositionally biased region" description="Basic residues" evidence="2">
    <location>
        <begin position="89"/>
        <end position="128"/>
    </location>
</feature>
<proteinExistence type="inferred from homology"/>
<sequence>MARLAGVDLPPGKRAEIGLTYIYGIGRTRSKSLLHRAGIDFDKKIRDLTEDEINKVRTILEEEGAVEGDLRKEISMNIKRHIEMGSYRGLRHRRSLPVRGQRTHTNARTRKGPRRGTVANKKKATGKT</sequence>
<reference key="1">
    <citation type="journal article" date="2009" name="Appl. Environ. Microbiol.">
        <title>Three genomes from the phylum Acidobacteria provide insight into the lifestyles of these microorganisms in soils.</title>
        <authorList>
            <person name="Ward N.L."/>
            <person name="Challacombe J.F."/>
            <person name="Janssen P.H."/>
            <person name="Henrissat B."/>
            <person name="Coutinho P.M."/>
            <person name="Wu M."/>
            <person name="Xie G."/>
            <person name="Haft D.H."/>
            <person name="Sait M."/>
            <person name="Badger J."/>
            <person name="Barabote R.D."/>
            <person name="Bradley B."/>
            <person name="Brettin T.S."/>
            <person name="Brinkac L.M."/>
            <person name="Bruce D."/>
            <person name="Creasy T."/>
            <person name="Daugherty S.C."/>
            <person name="Davidsen T.M."/>
            <person name="DeBoy R.T."/>
            <person name="Detter J.C."/>
            <person name="Dodson R.J."/>
            <person name="Durkin A.S."/>
            <person name="Ganapathy A."/>
            <person name="Gwinn-Giglio M."/>
            <person name="Han C.S."/>
            <person name="Khouri H."/>
            <person name="Kiss H."/>
            <person name="Kothari S.P."/>
            <person name="Madupu R."/>
            <person name="Nelson K.E."/>
            <person name="Nelson W.C."/>
            <person name="Paulsen I."/>
            <person name="Penn K."/>
            <person name="Ren Q."/>
            <person name="Rosovitz M.J."/>
            <person name="Selengut J.D."/>
            <person name="Shrivastava S."/>
            <person name="Sullivan S.A."/>
            <person name="Tapia R."/>
            <person name="Thompson L.S."/>
            <person name="Watkins K.L."/>
            <person name="Yang Q."/>
            <person name="Yu C."/>
            <person name="Zafar N."/>
            <person name="Zhou L."/>
            <person name="Kuske C.R."/>
        </authorList>
    </citation>
    <scope>NUCLEOTIDE SEQUENCE [LARGE SCALE GENOMIC DNA]</scope>
    <source>
        <strain>Ellin6076</strain>
    </source>
</reference>
<dbReference type="EMBL" id="CP000473">
    <property type="protein sequence ID" value="ABJ86048.1"/>
    <property type="molecule type" value="Genomic_DNA"/>
</dbReference>
<dbReference type="SMR" id="Q01WB7"/>
<dbReference type="FunCoup" id="Q01WB7">
    <property type="interactions" value="697"/>
</dbReference>
<dbReference type="STRING" id="234267.Acid_5093"/>
<dbReference type="KEGG" id="sus:Acid_5093"/>
<dbReference type="eggNOG" id="COG0099">
    <property type="taxonomic scope" value="Bacteria"/>
</dbReference>
<dbReference type="HOGENOM" id="CLU_103849_1_2_0"/>
<dbReference type="InParanoid" id="Q01WB7"/>
<dbReference type="OrthoDB" id="9803610at2"/>
<dbReference type="GO" id="GO:0005829">
    <property type="term" value="C:cytosol"/>
    <property type="evidence" value="ECO:0007669"/>
    <property type="project" value="TreeGrafter"/>
</dbReference>
<dbReference type="GO" id="GO:0015935">
    <property type="term" value="C:small ribosomal subunit"/>
    <property type="evidence" value="ECO:0007669"/>
    <property type="project" value="TreeGrafter"/>
</dbReference>
<dbReference type="GO" id="GO:0019843">
    <property type="term" value="F:rRNA binding"/>
    <property type="evidence" value="ECO:0007669"/>
    <property type="project" value="UniProtKB-UniRule"/>
</dbReference>
<dbReference type="GO" id="GO:0003735">
    <property type="term" value="F:structural constituent of ribosome"/>
    <property type="evidence" value="ECO:0007669"/>
    <property type="project" value="InterPro"/>
</dbReference>
<dbReference type="GO" id="GO:0000049">
    <property type="term" value="F:tRNA binding"/>
    <property type="evidence" value="ECO:0007669"/>
    <property type="project" value="UniProtKB-UniRule"/>
</dbReference>
<dbReference type="GO" id="GO:0006412">
    <property type="term" value="P:translation"/>
    <property type="evidence" value="ECO:0007669"/>
    <property type="project" value="UniProtKB-UniRule"/>
</dbReference>
<dbReference type="FunFam" id="1.10.8.50:FF:000001">
    <property type="entry name" value="30S ribosomal protein S13"/>
    <property type="match status" value="1"/>
</dbReference>
<dbReference type="FunFam" id="4.10.910.10:FF:000001">
    <property type="entry name" value="30S ribosomal protein S13"/>
    <property type="match status" value="1"/>
</dbReference>
<dbReference type="Gene3D" id="1.10.8.50">
    <property type="match status" value="1"/>
</dbReference>
<dbReference type="Gene3D" id="4.10.910.10">
    <property type="entry name" value="30s ribosomal protein s13, domain 2"/>
    <property type="match status" value="1"/>
</dbReference>
<dbReference type="HAMAP" id="MF_01315">
    <property type="entry name" value="Ribosomal_uS13"/>
    <property type="match status" value="1"/>
</dbReference>
<dbReference type="InterPro" id="IPR027437">
    <property type="entry name" value="Rbsml_uS13_C"/>
</dbReference>
<dbReference type="InterPro" id="IPR001892">
    <property type="entry name" value="Ribosomal_uS13"/>
</dbReference>
<dbReference type="InterPro" id="IPR010979">
    <property type="entry name" value="Ribosomal_uS13-like_H2TH"/>
</dbReference>
<dbReference type="InterPro" id="IPR019980">
    <property type="entry name" value="Ribosomal_uS13_bac-type"/>
</dbReference>
<dbReference type="InterPro" id="IPR018269">
    <property type="entry name" value="Ribosomal_uS13_CS"/>
</dbReference>
<dbReference type="NCBIfam" id="TIGR03631">
    <property type="entry name" value="uS13_bact"/>
    <property type="match status" value="1"/>
</dbReference>
<dbReference type="PANTHER" id="PTHR10871">
    <property type="entry name" value="30S RIBOSOMAL PROTEIN S13/40S RIBOSOMAL PROTEIN S18"/>
    <property type="match status" value="1"/>
</dbReference>
<dbReference type="PANTHER" id="PTHR10871:SF1">
    <property type="entry name" value="SMALL RIBOSOMAL SUBUNIT PROTEIN US13M"/>
    <property type="match status" value="1"/>
</dbReference>
<dbReference type="Pfam" id="PF00416">
    <property type="entry name" value="Ribosomal_S13"/>
    <property type="match status" value="1"/>
</dbReference>
<dbReference type="PIRSF" id="PIRSF002134">
    <property type="entry name" value="Ribosomal_S13"/>
    <property type="match status" value="1"/>
</dbReference>
<dbReference type="SUPFAM" id="SSF46946">
    <property type="entry name" value="S13-like H2TH domain"/>
    <property type="match status" value="1"/>
</dbReference>
<dbReference type="PROSITE" id="PS00646">
    <property type="entry name" value="RIBOSOMAL_S13_1"/>
    <property type="match status" value="1"/>
</dbReference>
<dbReference type="PROSITE" id="PS50159">
    <property type="entry name" value="RIBOSOMAL_S13_2"/>
    <property type="match status" value="1"/>
</dbReference>